<protein>
    <recommendedName>
        <fullName>Transmembrane protein 88</fullName>
    </recommendedName>
</protein>
<gene>
    <name type="primary">Tmem88</name>
</gene>
<accession>Q9D0N8</accession>
<accession>Q497Z2</accession>
<accession>Q8BRC2</accession>
<feature type="chain" id="PRO_0000251708" description="Transmembrane protein 88">
    <location>
        <begin position="1"/>
        <end position="159"/>
    </location>
</feature>
<feature type="transmembrane region" description="Helical" evidence="2">
    <location>
        <begin position="43"/>
        <end position="63"/>
    </location>
</feature>
<feature type="transmembrane region" description="Helical" evidence="2">
    <location>
        <begin position="88"/>
        <end position="108"/>
    </location>
</feature>
<feature type="sequence conflict" description="In Ref. 1; BAC32239." evidence="3" ref="1">
    <original>G</original>
    <variation>S</variation>
    <location>
        <position position="64"/>
    </location>
</feature>
<proteinExistence type="evidence at protein level"/>
<sequence length="159" mass="17358">MAEVPGAQRPVLAGGPEPRDPLDCWACAVLVTAQNLLVAVFNLLLLALVLGTILLPAVIMLGFGFLCHSQFLRSQAPLCTSHLRDPGFTALLVTGFLLLVPLLVLALATYRRLCLRLRLADCLVPYSRALYRRRRIPQPKQIPVSPGSRSVPTPGKVWV</sequence>
<dbReference type="EMBL" id="AK045149">
    <property type="protein sequence ID" value="BAC32239.1"/>
    <property type="molecule type" value="mRNA"/>
</dbReference>
<dbReference type="EMBL" id="AK011240">
    <property type="protein sequence ID" value="BAB27488.1"/>
    <property type="molecule type" value="mRNA"/>
</dbReference>
<dbReference type="EMBL" id="AK161789">
    <property type="protein sequence ID" value="BAE36575.1"/>
    <property type="molecule type" value="mRNA"/>
</dbReference>
<dbReference type="EMBL" id="AL596125">
    <property type="status" value="NOT_ANNOTATED_CDS"/>
    <property type="molecule type" value="Genomic_DNA"/>
</dbReference>
<dbReference type="EMBL" id="BC100316">
    <property type="protein sequence ID" value="AAI00317.1"/>
    <property type="molecule type" value="mRNA"/>
</dbReference>
<dbReference type="EMBL" id="BC120912">
    <property type="protein sequence ID" value="AAI20913.1"/>
    <property type="molecule type" value="mRNA"/>
</dbReference>
<dbReference type="CCDS" id="CCDS24894.1"/>
<dbReference type="RefSeq" id="NP_080191.3">
    <property type="nucleotide sequence ID" value="NM_025915.4"/>
</dbReference>
<dbReference type="SMR" id="Q9D0N8"/>
<dbReference type="FunCoup" id="Q9D0N8">
    <property type="interactions" value="316"/>
</dbReference>
<dbReference type="IntAct" id="Q9D0N8">
    <property type="interactions" value="1"/>
</dbReference>
<dbReference type="STRING" id="10090.ENSMUSP00000055528"/>
<dbReference type="GlyGen" id="Q9D0N8">
    <property type="glycosylation" value="1 site"/>
</dbReference>
<dbReference type="iPTMnet" id="Q9D0N8"/>
<dbReference type="PhosphoSitePlus" id="Q9D0N8"/>
<dbReference type="SwissPalm" id="Q9D0N8"/>
<dbReference type="PaxDb" id="10090-ENSMUSP00000055528"/>
<dbReference type="ProteomicsDB" id="259432"/>
<dbReference type="Pumba" id="Q9D0N8"/>
<dbReference type="Antibodypedia" id="58901">
    <property type="antibodies" value="41 antibodies from 17 providers"/>
</dbReference>
<dbReference type="DNASU" id="67020"/>
<dbReference type="Ensembl" id="ENSMUST00000050140.6">
    <property type="protein sequence ID" value="ENSMUSP00000055528.6"/>
    <property type="gene ID" value="ENSMUSG00000045377.6"/>
</dbReference>
<dbReference type="GeneID" id="67020"/>
<dbReference type="KEGG" id="mmu:67020"/>
<dbReference type="UCSC" id="uc007jqc.2">
    <property type="organism name" value="mouse"/>
</dbReference>
<dbReference type="AGR" id="MGI:1914270"/>
<dbReference type="CTD" id="92162"/>
<dbReference type="MGI" id="MGI:1914270">
    <property type="gene designation" value="Tmem88"/>
</dbReference>
<dbReference type="VEuPathDB" id="HostDB:ENSMUSG00000045377"/>
<dbReference type="eggNOG" id="ENOG502S52P">
    <property type="taxonomic scope" value="Eukaryota"/>
</dbReference>
<dbReference type="GeneTree" id="ENSGT00940000162021"/>
<dbReference type="HOGENOM" id="CLU_105667_1_0_1"/>
<dbReference type="InParanoid" id="Q9D0N8"/>
<dbReference type="OMA" id="CTAHFQD"/>
<dbReference type="OrthoDB" id="9948320at2759"/>
<dbReference type="PhylomeDB" id="Q9D0N8"/>
<dbReference type="TreeFam" id="TF332743"/>
<dbReference type="BioGRID-ORCS" id="67020">
    <property type="hits" value="4 hits in 78 CRISPR screens"/>
</dbReference>
<dbReference type="ChiTaRS" id="Tmem88">
    <property type="organism name" value="mouse"/>
</dbReference>
<dbReference type="PRO" id="PR:Q9D0N8"/>
<dbReference type="Proteomes" id="UP000000589">
    <property type="component" value="Chromosome 11"/>
</dbReference>
<dbReference type="RNAct" id="Q9D0N8">
    <property type="molecule type" value="protein"/>
</dbReference>
<dbReference type="Bgee" id="ENSMUSG00000045377">
    <property type="expression patterns" value="Expressed in epiblast cell in embryo and 62 other cell types or tissues"/>
</dbReference>
<dbReference type="GO" id="GO:0005829">
    <property type="term" value="C:cytosol"/>
    <property type="evidence" value="ECO:0000250"/>
    <property type="project" value="ParkinsonsUK-UCL"/>
</dbReference>
<dbReference type="GO" id="GO:0005886">
    <property type="term" value="C:plasma membrane"/>
    <property type="evidence" value="ECO:0000250"/>
    <property type="project" value="ParkinsonsUK-UCL"/>
</dbReference>
<dbReference type="GO" id="GO:0030165">
    <property type="term" value="F:PDZ domain binding"/>
    <property type="evidence" value="ECO:0000314"/>
    <property type="project" value="ParkinsonsUK-UCL"/>
</dbReference>
<dbReference type="GO" id="GO:0090090">
    <property type="term" value="P:negative regulation of canonical Wnt signaling pathway"/>
    <property type="evidence" value="ECO:0000250"/>
    <property type="project" value="ParkinsonsUK-UCL"/>
</dbReference>
<dbReference type="GO" id="GO:0072659">
    <property type="term" value="P:protein localization to plasma membrane"/>
    <property type="evidence" value="ECO:0000250"/>
    <property type="project" value="ParkinsonsUK-UCL"/>
</dbReference>
<dbReference type="GO" id="GO:0050821">
    <property type="term" value="P:protein stabilization"/>
    <property type="evidence" value="ECO:0000250"/>
    <property type="project" value="ParkinsonsUK-UCL"/>
</dbReference>
<dbReference type="GO" id="GO:0016055">
    <property type="term" value="P:Wnt signaling pathway"/>
    <property type="evidence" value="ECO:0007669"/>
    <property type="project" value="UniProtKB-KW"/>
</dbReference>
<dbReference type="InterPro" id="IPR033355">
    <property type="entry name" value="TMEM88"/>
</dbReference>
<dbReference type="PANTHER" id="PTHR28628:SF3">
    <property type="entry name" value="TRANSMEMBRANE PROTEIN 88"/>
    <property type="match status" value="1"/>
</dbReference>
<dbReference type="PANTHER" id="PTHR28628">
    <property type="entry name" value="TRANSMEMBRANE PROTEIN 88-RELATED"/>
    <property type="match status" value="1"/>
</dbReference>
<reference key="1">
    <citation type="journal article" date="2005" name="Science">
        <title>The transcriptional landscape of the mammalian genome.</title>
        <authorList>
            <person name="Carninci P."/>
            <person name="Kasukawa T."/>
            <person name="Katayama S."/>
            <person name="Gough J."/>
            <person name="Frith M.C."/>
            <person name="Maeda N."/>
            <person name="Oyama R."/>
            <person name="Ravasi T."/>
            <person name="Lenhard B."/>
            <person name="Wells C."/>
            <person name="Kodzius R."/>
            <person name="Shimokawa K."/>
            <person name="Bajic V.B."/>
            <person name="Brenner S.E."/>
            <person name="Batalov S."/>
            <person name="Forrest A.R."/>
            <person name="Zavolan M."/>
            <person name="Davis M.J."/>
            <person name="Wilming L.G."/>
            <person name="Aidinis V."/>
            <person name="Allen J.E."/>
            <person name="Ambesi-Impiombato A."/>
            <person name="Apweiler R."/>
            <person name="Aturaliya R.N."/>
            <person name="Bailey T.L."/>
            <person name="Bansal M."/>
            <person name="Baxter L."/>
            <person name="Beisel K.W."/>
            <person name="Bersano T."/>
            <person name="Bono H."/>
            <person name="Chalk A.M."/>
            <person name="Chiu K.P."/>
            <person name="Choudhary V."/>
            <person name="Christoffels A."/>
            <person name="Clutterbuck D.R."/>
            <person name="Crowe M.L."/>
            <person name="Dalla E."/>
            <person name="Dalrymple B.P."/>
            <person name="de Bono B."/>
            <person name="Della Gatta G."/>
            <person name="di Bernardo D."/>
            <person name="Down T."/>
            <person name="Engstrom P."/>
            <person name="Fagiolini M."/>
            <person name="Faulkner G."/>
            <person name="Fletcher C.F."/>
            <person name="Fukushima T."/>
            <person name="Furuno M."/>
            <person name="Futaki S."/>
            <person name="Gariboldi M."/>
            <person name="Georgii-Hemming P."/>
            <person name="Gingeras T.R."/>
            <person name="Gojobori T."/>
            <person name="Green R.E."/>
            <person name="Gustincich S."/>
            <person name="Harbers M."/>
            <person name="Hayashi Y."/>
            <person name="Hensch T.K."/>
            <person name="Hirokawa N."/>
            <person name="Hill D."/>
            <person name="Huminiecki L."/>
            <person name="Iacono M."/>
            <person name="Ikeo K."/>
            <person name="Iwama A."/>
            <person name="Ishikawa T."/>
            <person name="Jakt M."/>
            <person name="Kanapin A."/>
            <person name="Katoh M."/>
            <person name="Kawasawa Y."/>
            <person name="Kelso J."/>
            <person name="Kitamura H."/>
            <person name="Kitano H."/>
            <person name="Kollias G."/>
            <person name="Krishnan S.P."/>
            <person name="Kruger A."/>
            <person name="Kummerfeld S.K."/>
            <person name="Kurochkin I.V."/>
            <person name="Lareau L.F."/>
            <person name="Lazarevic D."/>
            <person name="Lipovich L."/>
            <person name="Liu J."/>
            <person name="Liuni S."/>
            <person name="McWilliam S."/>
            <person name="Madan Babu M."/>
            <person name="Madera M."/>
            <person name="Marchionni L."/>
            <person name="Matsuda H."/>
            <person name="Matsuzawa S."/>
            <person name="Miki H."/>
            <person name="Mignone F."/>
            <person name="Miyake S."/>
            <person name="Morris K."/>
            <person name="Mottagui-Tabar S."/>
            <person name="Mulder N."/>
            <person name="Nakano N."/>
            <person name="Nakauchi H."/>
            <person name="Ng P."/>
            <person name="Nilsson R."/>
            <person name="Nishiguchi S."/>
            <person name="Nishikawa S."/>
            <person name="Nori F."/>
            <person name="Ohara O."/>
            <person name="Okazaki Y."/>
            <person name="Orlando V."/>
            <person name="Pang K.C."/>
            <person name="Pavan W.J."/>
            <person name="Pavesi G."/>
            <person name="Pesole G."/>
            <person name="Petrovsky N."/>
            <person name="Piazza S."/>
            <person name="Reed J."/>
            <person name="Reid J.F."/>
            <person name="Ring B.Z."/>
            <person name="Ringwald M."/>
            <person name="Rost B."/>
            <person name="Ruan Y."/>
            <person name="Salzberg S.L."/>
            <person name="Sandelin A."/>
            <person name="Schneider C."/>
            <person name="Schoenbach C."/>
            <person name="Sekiguchi K."/>
            <person name="Semple C.A."/>
            <person name="Seno S."/>
            <person name="Sessa L."/>
            <person name="Sheng Y."/>
            <person name="Shibata Y."/>
            <person name="Shimada H."/>
            <person name="Shimada K."/>
            <person name="Silva D."/>
            <person name="Sinclair B."/>
            <person name="Sperling S."/>
            <person name="Stupka E."/>
            <person name="Sugiura K."/>
            <person name="Sultana R."/>
            <person name="Takenaka Y."/>
            <person name="Taki K."/>
            <person name="Tammoja K."/>
            <person name="Tan S.L."/>
            <person name="Tang S."/>
            <person name="Taylor M.S."/>
            <person name="Tegner J."/>
            <person name="Teichmann S.A."/>
            <person name="Ueda H.R."/>
            <person name="van Nimwegen E."/>
            <person name="Verardo R."/>
            <person name="Wei C.L."/>
            <person name="Yagi K."/>
            <person name="Yamanishi H."/>
            <person name="Zabarovsky E."/>
            <person name="Zhu S."/>
            <person name="Zimmer A."/>
            <person name="Hide W."/>
            <person name="Bult C."/>
            <person name="Grimmond S.M."/>
            <person name="Teasdale R.D."/>
            <person name="Liu E.T."/>
            <person name="Brusic V."/>
            <person name="Quackenbush J."/>
            <person name="Wahlestedt C."/>
            <person name="Mattick J.S."/>
            <person name="Hume D.A."/>
            <person name="Kai C."/>
            <person name="Sasaki D."/>
            <person name="Tomaru Y."/>
            <person name="Fukuda S."/>
            <person name="Kanamori-Katayama M."/>
            <person name="Suzuki M."/>
            <person name="Aoki J."/>
            <person name="Arakawa T."/>
            <person name="Iida J."/>
            <person name="Imamura K."/>
            <person name="Itoh M."/>
            <person name="Kato T."/>
            <person name="Kawaji H."/>
            <person name="Kawagashira N."/>
            <person name="Kawashima T."/>
            <person name="Kojima M."/>
            <person name="Kondo S."/>
            <person name="Konno H."/>
            <person name="Nakano K."/>
            <person name="Ninomiya N."/>
            <person name="Nishio T."/>
            <person name="Okada M."/>
            <person name="Plessy C."/>
            <person name="Shibata K."/>
            <person name="Shiraki T."/>
            <person name="Suzuki S."/>
            <person name="Tagami M."/>
            <person name="Waki K."/>
            <person name="Watahiki A."/>
            <person name="Okamura-Oho Y."/>
            <person name="Suzuki H."/>
            <person name="Kawai J."/>
            <person name="Hayashizaki Y."/>
        </authorList>
    </citation>
    <scope>NUCLEOTIDE SEQUENCE [LARGE SCALE MRNA]</scope>
    <source>
        <strain>C57BL/6J</strain>
        <tissue>Testis</tissue>
        <tissue>Thyroid</tissue>
    </source>
</reference>
<reference key="2">
    <citation type="journal article" date="2009" name="PLoS Biol.">
        <title>Lineage-specific biology revealed by a finished genome assembly of the mouse.</title>
        <authorList>
            <person name="Church D.M."/>
            <person name="Goodstadt L."/>
            <person name="Hillier L.W."/>
            <person name="Zody M.C."/>
            <person name="Goldstein S."/>
            <person name="She X."/>
            <person name="Bult C.J."/>
            <person name="Agarwala R."/>
            <person name="Cherry J.L."/>
            <person name="DiCuccio M."/>
            <person name="Hlavina W."/>
            <person name="Kapustin Y."/>
            <person name="Meric P."/>
            <person name="Maglott D."/>
            <person name="Birtle Z."/>
            <person name="Marques A.C."/>
            <person name="Graves T."/>
            <person name="Zhou S."/>
            <person name="Teague B."/>
            <person name="Potamousis K."/>
            <person name="Churas C."/>
            <person name="Place M."/>
            <person name="Herschleb J."/>
            <person name="Runnheim R."/>
            <person name="Forrest D."/>
            <person name="Amos-Landgraf J."/>
            <person name="Schwartz D.C."/>
            <person name="Cheng Z."/>
            <person name="Lindblad-Toh K."/>
            <person name="Eichler E.E."/>
            <person name="Ponting C.P."/>
        </authorList>
    </citation>
    <scope>NUCLEOTIDE SEQUENCE [LARGE SCALE GENOMIC DNA]</scope>
    <source>
        <strain>C57BL/6J</strain>
    </source>
</reference>
<reference key="3">
    <citation type="journal article" date="2004" name="Genome Res.">
        <title>The status, quality, and expansion of the NIH full-length cDNA project: the Mammalian Gene Collection (MGC).</title>
        <authorList>
            <consortium name="The MGC Project Team"/>
        </authorList>
    </citation>
    <scope>NUCLEOTIDE SEQUENCE [LARGE SCALE MRNA]</scope>
    <source>
        <tissue>Thyroid</tissue>
    </source>
</reference>
<organism>
    <name type="scientific">Mus musculus</name>
    <name type="common">Mouse</name>
    <dbReference type="NCBI Taxonomy" id="10090"/>
    <lineage>
        <taxon>Eukaryota</taxon>
        <taxon>Metazoa</taxon>
        <taxon>Chordata</taxon>
        <taxon>Craniata</taxon>
        <taxon>Vertebrata</taxon>
        <taxon>Euteleostomi</taxon>
        <taxon>Mammalia</taxon>
        <taxon>Eutheria</taxon>
        <taxon>Euarchontoglires</taxon>
        <taxon>Glires</taxon>
        <taxon>Rodentia</taxon>
        <taxon>Myomorpha</taxon>
        <taxon>Muroidea</taxon>
        <taxon>Muridae</taxon>
        <taxon>Murinae</taxon>
        <taxon>Mus</taxon>
        <taxon>Mus</taxon>
    </lineage>
</organism>
<keyword id="KW-1003">Cell membrane</keyword>
<keyword id="KW-0217">Developmental protein</keyword>
<keyword id="KW-0472">Membrane</keyword>
<keyword id="KW-1185">Reference proteome</keyword>
<keyword id="KW-0812">Transmembrane</keyword>
<keyword id="KW-1133">Transmembrane helix</keyword>
<keyword id="KW-0879">Wnt signaling pathway</keyword>
<comment type="function">
    <text evidence="1">Inhibits the Wnt/beta-catenin signaling pathway. Crucial for heart development and acts downstream of GATA factors in the pre-cardiac mesoderm to specify lineage commitment of cardiomyocyte development (By similarity).</text>
</comment>
<comment type="subunit">
    <text evidence="1">Interacts (via C-terminus) with DVL1.</text>
</comment>
<comment type="interaction">
    <interactant intactId="EBI-6136970">
        <id>Q9D0N8</id>
    </interactant>
    <interactant intactId="EBI-1538407">
        <id>P51141</id>
        <label>Dvl1</label>
    </interactant>
    <organismsDiffer>false</organismsDiffer>
    <experiments>2</experiments>
</comment>
<comment type="subcellular location">
    <subcellularLocation>
        <location evidence="1">Cell membrane</location>
        <topology>Multi-pass membrane protein</topology>
    </subcellularLocation>
</comment>
<comment type="similarity">
    <text evidence="3">Belongs to the TMEM88 family.</text>
</comment>
<name>TMM88_MOUSE</name>
<evidence type="ECO:0000250" key="1"/>
<evidence type="ECO:0000255" key="2"/>
<evidence type="ECO:0000305" key="3"/>